<organism>
    <name type="scientific">Saccharomyces cerevisiae (strain ATCC 204508 / S288c)</name>
    <name type="common">Baker's yeast</name>
    <dbReference type="NCBI Taxonomy" id="559292"/>
    <lineage>
        <taxon>Eukaryota</taxon>
        <taxon>Fungi</taxon>
        <taxon>Dikarya</taxon>
        <taxon>Ascomycota</taxon>
        <taxon>Saccharomycotina</taxon>
        <taxon>Saccharomycetes</taxon>
        <taxon>Saccharomycetales</taxon>
        <taxon>Saccharomycetaceae</taxon>
        <taxon>Saccharomyces</taxon>
    </lineage>
</organism>
<dbReference type="EMBL" id="Z74819">
    <property type="protein sequence ID" value="CAA99087.1"/>
    <property type="molecule type" value="Genomic_DNA"/>
</dbReference>
<dbReference type="EMBL" id="BK006948">
    <property type="protein sequence ID" value="DAA10707.2"/>
    <property type="molecule type" value="Genomic_DNA"/>
</dbReference>
<dbReference type="PIR" id="S66770">
    <property type="entry name" value="S66770"/>
</dbReference>
<dbReference type="RefSeq" id="NP_014565.2">
    <property type="nucleotide sequence ID" value="NM_001183331.2"/>
</dbReference>
<dbReference type="PDB" id="5Z1G">
    <property type="method" value="X-ray"/>
    <property type="resolution" value="2.29 A"/>
    <property type="chains" value="B/D=26-259"/>
</dbReference>
<dbReference type="PDB" id="5Z3G">
    <property type="method" value="EM"/>
    <property type="resolution" value="3.65 A"/>
    <property type="chains" value="a=1-291"/>
</dbReference>
<dbReference type="PDB" id="6C0F">
    <property type="method" value="EM"/>
    <property type="resolution" value="3.70 A"/>
    <property type="chains" value="b=1-291"/>
</dbReference>
<dbReference type="PDB" id="6CB1">
    <property type="method" value="EM"/>
    <property type="resolution" value="4.60 A"/>
    <property type="chains" value="b=1-291"/>
</dbReference>
<dbReference type="PDB" id="6ELZ">
    <property type="method" value="EM"/>
    <property type="resolution" value="3.30 A"/>
    <property type="chains" value="A=1-291"/>
</dbReference>
<dbReference type="PDB" id="6EM1">
    <property type="method" value="EM"/>
    <property type="resolution" value="3.60 A"/>
    <property type="chains" value="A=1-291"/>
</dbReference>
<dbReference type="PDB" id="6EM3">
    <property type="method" value="EM"/>
    <property type="resolution" value="3.20 A"/>
    <property type="chains" value="A=1-291"/>
</dbReference>
<dbReference type="PDB" id="6EM4">
    <property type="method" value="EM"/>
    <property type="resolution" value="4.10 A"/>
    <property type="chains" value="A=1-291"/>
</dbReference>
<dbReference type="PDB" id="6EM5">
    <property type="method" value="EM"/>
    <property type="resolution" value="4.30 A"/>
    <property type="chains" value="A=1-291"/>
</dbReference>
<dbReference type="PDB" id="7NAC">
    <property type="method" value="EM"/>
    <property type="resolution" value="3.04 A"/>
    <property type="chains" value="A=1-291"/>
</dbReference>
<dbReference type="PDB" id="7OHR">
    <property type="method" value="EM"/>
    <property type="resolution" value="4.72 A"/>
    <property type="chains" value="A=1-291"/>
</dbReference>
<dbReference type="PDB" id="7OHS">
    <property type="method" value="EM"/>
    <property type="resolution" value="4.38 A"/>
    <property type="chains" value="A=1-291"/>
</dbReference>
<dbReference type="PDB" id="7OHV">
    <property type="method" value="EM"/>
    <property type="resolution" value="3.90 A"/>
    <property type="chains" value="A=1-291"/>
</dbReference>
<dbReference type="PDB" id="7OHW">
    <property type="method" value="EM"/>
    <property type="resolution" value="3.50 A"/>
    <property type="chains" value="A=1-291"/>
</dbReference>
<dbReference type="PDB" id="7R6K">
    <property type="method" value="EM"/>
    <property type="resolution" value="3.17 A"/>
    <property type="chains" value="A=1-291"/>
</dbReference>
<dbReference type="PDB" id="7R7A">
    <property type="method" value="EM"/>
    <property type="resolution" value="3.04 A"/>
    <property type="chains" value="A=1-291"/>
</dbReference>
<dbReference type="PDB" id="7R7C">
    <property type="method" value="EM"/>
    <property type="resolution" value="3.71 A"/>
    <property type="chains" value="A=1-291"/>
</dbReference>
<dbReference type="PDB" id="8E5T">
    <property type="method" value="EM"/>
    <property type="resolution" value="4.00 A"/>
    <property type="chains" value="b=1-291"/>
</dbReference>
<dbReference type="PDB" id="8V83">
    <property type="method" value="EM"/>
    <property type="resolution" value="2.53 A"/>
    <property type="chains" value="A=1-291"/>
</dbReference>
<dbReference type="PDB" id="8V84">
    <property type="method" value="EM"/>
    <property type="resolution" value="2.70 A"/>
    <property type="chains" value="A=1-291"/>
</dbReference>
<dbReference type="PDB" id="8V87">
    <property type="method" value="EM"/>
    <property type="resolution" value="2.66 A"/>
    <property type="chains" value="A=1-291"/>
</dbReference>
<dbReference type="PDBsum" id="5Z1G"/>
<dbReference type="PDBsum" id="5Z3G"/>
<dbReference type="PDBsum" id="6C0F"/>
<dbReference type="PDBsum" id="6CB1"/>
<dbReference type="PDBsum" id="6ELZ"/>
<dbReference type="PDBsum" id="6EM1"/>
<dbReference type="PDBsum" id="6EM3"/>
<dbReference type="PDBsum" id="6EM4"/>
<dbReference type="PDBsum" id="6EM5"/>
<dbReference type="PDBsum" id="7NAC"/>
<dbReference type="PDBsum" id="7OHR"/>
<dbReference type="PDBsum" id="7OHS"/>
<dbReference type="PDBsum" id="7OHV"/>
<dbReference type="PDBsum" id="7OHW"/>
<dbReference type="PDBsum" id="7R6K"/>
<dbReference type="PDBsum" id="7R7A"/>
<dbReference type="PDBsum" id="7R7C"/>
<dbReference type="PDBsum" id="8E5T"/>
<dbReference type="PDBsum" id="8V83"/>
<dbReference type="PDBsum" id="8V84"/>
<dbReference type="PDBsum" id="8V87"/>
<dbReference type="EMDB" id="EMD-12906"/>
<dbReference type="EMDB" id="EMD-12907"/>
<dbReference type="EMDB" id="EMD-12910"/>
<dbReference type="EMDB" id="EMD-12911"/>
<dbReference type="EMDB" id="EMD-24269"/>
<dbReference type="EMDB" id="EMD-24280"/>
<dbReference type="EMDB" id="EMD-24296"/>
<dbReference type="EMDB" id="EMD-24297"/>
<dbReference type="EMDB" id="EMD-27919"/>
<dbReference type="EMDB" id="EMD-43017"/>
<dbReference type="EMDB" id="EMD-43021"/>
<dbReference type="EMDB" id="EMD-43027"/>
<dbReference type="EMDB" id="EMD-6878"/>
<dbReference type="EMDB" id="EMD-7324"/>
<dbReference type="EMDB" id="EMD-7445"/>
<dbReference type="SMR" id="Q08235"/>
<dbReference type="BioGRID" id="34325">
    <property type="interactions" value="340"/>
</dbReference>
<dbReference type="DIP" id="DIP-6317N"/>
<dbReference type="FunCoup" id="Q08235">
    <property type="interactions" value="1432"/>
</dbReference>
<dbReference type="IntAct" id="Q08235">
    <property type="interactions" value="106"/>
</dbReference>
<dbReference type="MINT" id="Q08235"/>
<dbReference type="STRING" id="4932.YOL077C"/>
<dbReference type="iPTMnet" id="Q08235"/>
<dbReference type="PaxDb" id="4932-YOL077C"/>
<dbReference type="PeptideAtlas" id="Q08235"/>
<dbReference type="EnsemblFungi" id="YOL077C_mRNA">
    <property type="protein sequence ID" value="YOL077C"/>
    <property type="gene ID" value="YOL077C"/>
</dbReference>
<dbReference type="GeneID" id="854078"/>
<dbReference type="KEGG" id="sce:YOL077C"/>
<dbReference type="AGR" id="SGD:S000005437"/>
<dbReference type="SGD" id="S000005437">
    <property type="gene designation" value="BRX1"/>
</dbReference>
<dbReference type="VEuPathDB" id="FungiDB:YOL077C"/>
<dbReference type="eggNOG" id="KOG2971">
    <property type="taxonomic scope" value="Eukaryota"/>
</dbReference>
<dbReference type="GeneTree" id="ENSGT00390000014467"/>
<dbReference type="HOGENOM" id="CLU_048373_2_1_1"/>
<dbReference type="InParanoid" id="Q08235"/>
<dbReference type="OMA" id="YRHRHLM"/>
<dbReference type="OrthoDB" id="1638493at2759"/>
<dbReference type="BioCyc" id="YEAST:G3O-33481-MONOMER"/>
<dbReference type="BioGRID-ORCS" id="854078">
    <property type="hits" value="7 hits in 10 CRISPR screens"/>
</dbReference>
<dbReference type="CD-CODE" id="BDAE0F88">
    <property type="entry name" value="Nucleolus"/>
</dbReference>
<dbReference type="PRO" id="PR:Q08235"/>
<dbReference type="Proteomes" id="UP000002311">
    <property type="component" value="Chromosome XV"/>
</dbReference>
<dbReference type="RNAct" id="Q08235">
    <property type="molecule type" value="protein"/>
</dbReference>
<dbReference type="GO" id="GO:0005730">
    <property type="term" value="C:nucleolus"/>
    <property type="evidence" value="ECO:0000314"/>
    <property type="project" value="SGD"/>
</dbReference>
<dbReference type="GO" id="GO:0030687">
    <property type="term" value="C:preribosome, large subunit precursor"/>
    <property type="evidence" value="ECO:0000314"/>
    <property type="project" value="SGD"/>
</dbReference>
<dbReference type="GO" id="GO:0008097">
    <property type="term" value="F:5S rRNA binding"/>
    <property type="evidence" value="ECO:0000314"/>
    <property type="project" value="SGD"/>
</dbReference>
<dbReference type="GO" id="GO:0003723">
    <property type="term" value="F:RNA binding"/>
    <property type="evidence" value="ECO:0000318"/>
    <property type="project" value="GO_Central"/>
</dbReference>
<dbReference type="GO" id="GO:0042134">
    <property type="term" value="F:rRNA primary transcript binding"/>
    <property type="evidence" value="ECO:0000314"/>
    <property type="project" value="SGD"/>
</dbReference>
<dbReference type="GO" id="GO:0000464">
    <property type="term" value="P:endonucleolytic cleavage in ITS1 upstream of 5.8S rRNA from tricistronic rRNA transcript (SSU-rRNA, 5.8S rRNA, LSU-rRNA)"/>
    <property type="evidence" value="ECO:0000315"/>
    <property type="project" value="SGD"/>
</dbReference>
<dbReference type="GO" id="GO:0000465">
    <property type="term" value="P:exonucleolytic trimming to generate mature 5'-end of 5.8S rRNA from tricistronic rRNA transcript (SSU-rRNA, 5.8S rRNA, LSU-rRNA)"/>
    <property type="evidence" value="ECO:0000315"/>
    <property type="project" value="SGD"/>
</dbReference>
<dbReference type="GO" id="GO:0000027">
    <property type="term" value="P:ribosomal large subunit assembly"/>
    <property type="evidence" value="ECO:0000315"/>
    <property type="project" value="SGD"/>
</dbReference>
<dbReference type="FunFam" id="3.40.50.10480:FF:000003">
    <property type="entry name" value="Ribosome biogenesis protein BRX1"/>
    <property type="match status" value="1"/>
</dbReference>
<dbReference type="Gene3D" id="3.40.50.10480">
    <property type="entry name" value="Probable brix-domain ribosomal biogenesis protein"/>
    <property type="match status" value="1"/>
</dbReference>
<dbReference type="InterPro" id="IPR007109">
    <property type="entry name" value="Brix"/>
</dbReference>
<dbReference type="InterPro" id="IPR026532">
    <property type="entry name" value="BRX1"/>
</dbReference>
<dbReference type="PANTHER" id="PTHR13634">
    <property type="entry name" value="RIBOSOME BIOGENESIS PROTEIN BRIX"/>
    <property type="match status" value="1"/>
</dbReference>
<dbReference type="PANTHER" id="PTHR13634:SF0">
    <property type="entry name" value="RIBOSOME BIOGENESIS PROTEIN BRX1 HOMOLOG"/>
    <property type="match status" value="1"/>
</dbReference>
<dbReference type="Pfam" id="PF04427">
    <property type="entry name" value="Brix"/>
    <property type="match status" value="1"/>
</dbReference>
<dbReference type="SMART" id="SM00879">
    <property type="entry name" value="Brix"/>
    <property type="match status" value="1"/>
</dbReference>
<dbReference type="SUPFAM" id="SSF52954">
    <property type="entry name" value="Class II aaRS ABD-related"/>
    <property type="match status" value="1"/>
</dbReference>
<dbReference type="PROSITE" id="PS50833">
    <property type="entry name" value="BRIX"/>
    <property type="match status" value="1"/>
</dbReference>
<name>BRX1_YEAST</name>
<reference key="1">
    <citation type="journal article" date="1997" name="Yeast">
        <title>Sequence analysis of a 33.2 kb segment from the left arm of yeast chromosome XV reveals eight known genes and ten new open reading frames including homologues of ABC transporters, inositol phosphatases and human expressed sequence tags.</title>
        <authorList>
            <person name="Tzermia M."/>
            <person name="Katsoulou C."/>
            <person name="Alexandraki D."/>
        </authorList>
    </citation>
    <scope>NUCLEOTIDE SEQUENCE [GENOMIC DNA]</scope>
</reference>
<reference key="2">
    <citation type="journal article" date="1997" name="Nature">
        <title>The nucleotide sequence of Saccharomyces cerevisiae chromosome XV.</title>
        <authorList>
            <person name="Dujon B."/>
            <person name="Albermann K."/>
            <person name="Aldea M."/>
            <person name="Alexandraki D."/>
            <person name="Ansorge W."/>
            <person name="Arino J."/>
            <person name="Benes V."/>
            <person name="Bohn C."/>
            <person name="Bolotin-Fukuhara M."/>
            <person name="Bordonne R."/>
            <person name="Boyer J."/>
            <person name="Camasses A."/>
            <person name="Casamayor A."/>
            <person name="Casas C."/>
            <person name="Cheret G."/>
            <person name="Cziepluch C."/>
            <person name="Daignan-Fornier B."/>
            <person name="Dang V.-D."/>
            <person name="de Haan M."/>
            <person name="Delius H."/>
            <person name="Durand P."/>
            <person name="Fairhead C."/>
            <person name="Feldmann H."/>
            <person name="Gaillon L."/>
            <person name="Galisson F."/>
            <person name="Gamo F.-J."/>
            <person name="Gancedo C."/>
            <person name="Goffeau A."/>
            <person name="Goulding S.E."/>
            <person name="Grivell L.A."/>
            <person name="Habbig B."/>
            <person name="Hand N.J."/>
            <person name="Hani J."/>
            <person name="Hattenhorst U."/>
            <person name="Hebling U."/>
            <person name="Hernando Y."/>
            <person name="Herrero E."/>
            <person name="Heumann K."/>
            <person name="Hiesel R."/>
            <person name="Hilger F."/>
            <person name="Hofmann B."/>
            <person name="Hollenberg C.P."/>
            <person name="Hughes B."/>
            <person name="Jauniaux J.-C."/>
            <person name="Kalogeropoulos A."/>
            <person name="Katsoulou C."/>
            <person name="Kordes E."/>
            <person name="Lafuente M.J."/>
            <person name="Landt O."/>
            <person name="Louis E.J."/>
            <person name="Maarse A.C."/>
            <person name="Madania A."/>
            <person name="Mannhaupt G."/>
            <person name="Marck C."/>
            <person name="Martin R.P."/>
            <person name="Mewes H.-W."/>
            <person name="Michaux G."/>
            <person name="Paces V."/>
            <person name="Parle-McDermott A.G."/>
            <person name="Pearson B.M."/>
            <person name="Perrin A."/>
            <person name="Pettersson B."/>
            <person name="Poch O."/>
            <person name="Pohl T.M."/>
            <person name="Poirey R."/>
            <person name="Portetelle D."/>
            <person name="Pujol A."/>
            <person name="Purnelle B."/>
            <person name="Ramezani Rad M."/>
            <person name="Rechmann S."/>
            <person name="Schwager C."/>
            <person name="Schweizer M."/>
            <person name="Sor F."/>
            <person name="Sterky F."/>
            <person name="Tarassov I.A."/>
            <person name="Teodoru C."/>
            <person name="Tettelin H."/>
            <person name="Thierry A."/>
            <person name="Tobiasch E."/>
            <person name="Tzermia M."/>
            <person name="Uhlen M."/>
            <person name="Unseld M."/>
            <person name="Valens M."/>
            <person name="Vandenbol M."/>
            <person name="Vetter I."/>
            <person name="Vlcek C."/>
            <person name="Voet M."/>
            <person name="Volckaert G."/>
            <person name="Voss H."/>
            <person name="Wambutt R."/>
            <person name="Wedler H."/>
            <person name="Wiemann S."/>
            <person name="Winsor B."/>
            <person name="Wolfe K.H."/>
            <person name="Zollner A."/>
            <person name="Zumstein E."/>
            <person name="Kleine K."/>
        </authorList>
    </citation>
    <scope>NUCLEOTIDE SEQUENCE [LARGE SCALE GENOMIC DNA]</scope>
    <source>
        <strain>ATCC 204508 / S288c</strain>
    </source>
</reference>
<reference key="3">
    <citation type="journal article" date="2014" name="G3 (Bethesda)">
        <title>The reference genome sequence of Saccharomyces cerevisiae: Then and now.</title>
        <authorList>
            <person name="Engel S.R."/>
            <person name="Dietrich F.S."/>
            <person name="Fisk D.G."/>
            <person name="Binkley G."/>
            <person name="Balakrishnan R."/>
            <person name="Costanzo M.C."/>
            <person name="Dwight S.S."/>
            <person name="Hitz B.C."/>
            <person name="Karra K."/>
            <person name="Nash R.S."/>
            <person name="Weng S."/>
            <person name="Wong E.D."/>
            <person name="Lloyd P."/>
            <person name="Skrzypek M.S."/>
            <person name="Miyasato S.R."/>
            <person name="Simison M."/>
            <person name="Cherry J.M."/>
        </authorList>
    </citation>
    <scope>GENOME REANNOTATION</scope>
    <scope>SEQUENCE REVISION TO 161</scope>
    <source>
        <strain>ATCC 204508 / S288c</strain>
    </source>
</reference>
<reference key="4">
    <citation type="journal article" date="2001" name="Biol. Chem.">
        <title>Brix from Xenopus laevis and brx1p from yeast define a new family of proteins involved in the biogenesis of large ribosomal subunits.</title>
        <authorList>
            <person name="Kaser A."/>
            <person name="Bogengruber E."/>
            <person name="Hallegger M."/>
            <person name="Doppler E."/>
            <person name="Lepperdinger G."/>
            <person name="Jantsch M."/>
            <person name="Breitenbach M."/>
            <person name="Kreil G."/>
        </authorList>
    </citation>
    <scope>FUNCTION</scope>
    <scope>SUBCELLULAR LOCATION</scope>
</reference>
<reference key="5">
    <citation type="journal article" date="2003" name="Nature">
        <title>Global analysis of protein localization in budding yeast.</title>
        <authorList>
            <person name="Huh W.-K."/>
            <person name="Falvo J.V."/>
            <person name="Gerke L.C."/>
            <person name="Carroll A.S."/>
            <person name="Howson R.W."/>
            <person name="Weissman J.S."/>
            <person name="O'Shea E.K."/>
        </authorList>
    </citation>
    <scope>SUBCELLULAR LOCATION [LARGE SCALE ANALYSIS]</scope>
</reference>
<reference key="6">
    <citation type="journal article" date="2003" name="Nature">
        <title>Global analysis of protein expression in yeast.</title>
        <authorList>
            <person name="Ghaemmaghami S."/>
            <person name="Huh W.-K."/>
            <person name="Bower K."/>
            <person name="Howson R.W."/>
            <person name="Belle A."/>
            <person name="Dephoure N."/>
            <person name="O'Shea E.K."/>
            <person name="Weissman J.S."/>
        </authorList>
    </citation>
    <scope>LEVEL OF PROTEIN EXPRESSION [LARGE SCALE ANALYSIS]</scope>
</reference>
<reference key="7">
    <citation type="journal article" date="2008" name="Mol. Cell. Proteomics">
        <title>A multidimensional chromatography technology for in-depth phosphoproteome analysis.</title>
        <authorList>
            <person name="Albuquerque C.P."/>
            <person name="Smolka M.B."/>
            <person name="Payne S.H."/>
            <person name="Bafna V."/>
            <person name="Eng J."/>
            <person name="Zhou H."/>
        </authorList>
    </citation>
    <scope>PHOSPHORYLATION [LARGE SCALE ANALYSIS] AT SER-285</scope>
    <scope>IDENTIFICATION BY MASS SPECTROMETRY [LARGE SCALE ANALYSIS]</scope>
</reference>
<reference key="8">
    <citation type="journal article" date="2009" name="Science">
        <title>Global analysis of Cdk1 substrate phosphorylation sites provides insights into evolution.</title>
        <authorList>
            <person name="Holt L.J."/>
            <person name="Tuch B.B."/>
            <person name="Villen J."/>
            <person name="Johnson A.D."/>
            <person name="Gygi S.P."/>
            <person name="Morgan D.O."/>
        </authorList>
    </citation>
    <scope>PHOSPHORYLATION [LARGE SCALE ANALYSIS] AT SER-285</scope>
    <scope>IDENTIFICATION BY MASS SPECTROMETRY [LARGE SCALE ANALYSIS]</scope>
</reference>
<gene>
    <name type="primary">BRX1</name>
    <name type="ordered locus">YOL077C</name>
</gene>
<feature type="chain" id="PRO_0000120235" description="Ribosome biogenesis protein BRX1">
    <location>
        <begin position="1"/>
        <end position="291"/>
    </location>
</feature>
<feature type="domain" description="Brix" evidence="1">
    <location>
        <begin position="31"/>
        <end position="232"/>
    </location>
</feature>
<feature type="modified residue" description="Phosphoserine" evidence="6 7">
    <location>
        <position position="285"/>
    </location>
</feature>
<feature type="sequence conflict" description="In Ref. 1 and 2; CAA99087." evidence="5" ref="1 2">
    <original>G</original>
    <variation>C</variation>
    <location>
        <position position="161"/>
    </location>
</feature>
<feature type="strand" evidence="8">
    <location>
        <begin position="33"/>
        <end position="37"/>
    </location>
</feature>
<feature type="helix" evidence="8">
    <location>
        <begin position="43"/>
        <end position="55"/>
    </location>
</feature>
<feature type="strand" evidence="8">
    <location>
        <begin position="59"/>
        <end position="61"/>
    </location>
</feature>
<feature type="helix" evidence="8">
    <location>
        <begin position="73"/>
        <end position="80"/>
    </location>
</feature>
<feature type="strand" evidence="8">
    <location>
        <begin position="84"/>
        <end position="92"/>
    </location>
</feature>
<feature type="turn" evidence="8">
    <location>
        <begin position="93"/>
        <end position="95"/>
    </location>
</feature>
<feature type="strand" evidence="8">
    <location>
        <begin position="96"/>
        <end position="102"/>
    </location>
</feature>
<feature type="turn" evidence="8">
    <location>
        <begin position="104"/>
        <end position="106"/>
    </location>
</feature>
<feature type="strand" evidence="8">
    <location>
        <begin position="109"/>
        <end position="118"/>
    </location>
</feature>
<feature type="strand" evidence="8">
    <location>
        <begin position="136"/>
        <end position="139"/>
    </location>
</feature>
<feature type="helix" evidence="8">
    <location>
        <begin position="141"/>
        <end position="144"/>
    </location>
</feature>
<feature type="helix" evidence="8">
    <location>
        <begin position="147"/>
        <end position="160"/>
    </location>
</feature>
<feature type="strand" evidence="8">
    <location>
        <begin position="170"/>
        <end position="172"/>
    </location>
</feature>
<feature type="strand" evidence="8">
    <location>
        <begin position="175"/>
        <end position="182"/>
    </location>
</feature>
<feature type="strand" evidence="8">
    <location>
        <begin position="185"/>
        <end position="194"/>
    </location>
</feature>
<feature type="helix" evidence="9">
    <location>
        <begin position="200"/>
        <end position="205"/>
    </location>
</feature>
<feature type="strand" evidence="8">
    <location>
        <begin position="211"/>
        <end position="214"/>
    </location>
</feature>
<feature type="strand" evidence="8">
    <location>
        <begin position="218"/>
        <end position="231"/>
    </location>
</feature>
<feature type="strand" evidence="8">
    <location>
        <begin position="235"/>
        <end position="238"/>
    </location>
</feature>
<feature type="helix" evidence="8">
    <location>
        <begin position="245"/>
        <end position="253"/>
    </location>
</feature>
<keyword id="KW-0002">3D-structure</keyword>
<keyword id="KW-0539">Nucleus</keyword>
<keyword id="KW-0597">Phosphoprotein</keyword>
<keyword id="KW-1185">Reference proteome</keyword>
<keyword id="KW-0690">Ribosome biogenesis</keyword>
<sequence>MSSIYKALAGKSKDNKSEKKQGNVKQFMNKQRTLLISSRGVNYRHRHLIQDLSGLLPHSRKEPKLDTKKDLQQLNEIAELYNCNNVLFFEARKHQDLYLWLSKPPNGPTIKFYIQNLHTMDELNFTGNCLKGSRPVLSFDQRFESSPHYQLIKELLVHNFGVPPNARKSKPFIDHVMSFSIVDDKIWVRTYEISHSTKNKEEYEDGEEDISLVEIGPRFVMTVILILEGSFGGPKIYENKQYVSPNVVRAQIKQQAAEEAKSRAEAAVERKIKRRENVLAADPLSNDALFK</sequence>
<accession>Q08235</accession>
<accession>D6W1Z1</accession>
<comment type="function">
    <text evidence="2">Required for biogenesis of the 60S ribosomal subunit.</text>
</comment>
<comment type="subunit">
    <text>Part of a complex that includes BRX1, RPF1, RPF2 and SSF1 or SSF2.</text>
</comment>
<comment type="interaction">
    <interactant intactId="EBI-3775">
        <id>Q08235</id>
    </interactant>
    <interactant intactId="EBI-6289">
        <id>P36049</id>
        <label>EBP2</label>
    </interactant>
    <organismsDiffer>false</organismsDiffer>
    <experiments>6</experiments>
</comment>
<comment type="interaction">
    <interactant intactId="EBI-3775">
        <id>Q08235</id>
    </interactant>
    <interactant intactId="EBI-22906">
        <id>P43586</id>
        <label>LOC1</label>
    </interactant>
    <organismsDiffer>false</organismsDiffer>
    <experiments>4</experiments>
</comment>
<comment type="interaction">
    <interactant intactId="EBI-3775">
        <id>Q08235</id>
    </interactant>
    <interactant intactId="EBI-29259">
        <id>P39744</id>
        <label>NOC2</label>
    </interactant>
    <organismsDiffer>false</organismsDiffer>
    <experiments>5</experiments>
</comment>
<comment type="interaction">
    <interactant intactId="EBI-3775">
        <id>Q08235</id>
    </interactant>
    <interactant intactId="EBI-14328">
        <id>P21304</id>
        <label>PWP1</label>
    </interactant>
    <organismsDiffer>false</organismsDiffer>
    <experiments>4</experiments>
</comment>
<comment type="interaction">
    <interactant intactId="EBI-3775">
        <id>Q08235</id>
    </interactant>
    <interactant intactId="EBI-16011">
        <id>Q05022</id>
        <label>RRP5</label>
    </interactant>
    <organismsDiffer>false</organismsDiffer>
    <experiments>4</experiments>
</comment>
<comment type="interaction">
    <interactant intactId="EBI-3775">
        <id>Q08235</id>
    </interactant>
    <interactant intactId="EBI-9046">
        <id>Q12522</id>
        <label>TIF6</label>
    </interactant>
    <organismsDiffer>false</organismsDiffer>
    <experiments>3</experiments>
</comment>
<comment type="subcellular location">
    <subcellularLocation>
        <location evidence="2 3">Nucleus</location>
        <location evidence="2 3">Nucleolus</location>
    </subcellularLocation>
</comment>
<comment type="miscellaneous">
    <text evidence="4">Present with 13200 molecules/cell in log phase SD medium.</text>
</comment>
<comment type="similarity">
    <text evidence="5">Belongs to the BRX1 family.</text>
</comment>
<proteinExistence type="evidence at protein level"/>
<protein>
    <recommendedName>
        <fullName>Ribosome biogenesis protein BRX1</fullName>
    </recommendedName>
</protein>
<evidence type="ECO:0000255" key="1">
    <source>
        <dbReference type="PROSITE-ProRule" id="PRU00034"/>
    </source>
</evidence>
<evidence type="ECO:0000269" key="2">
    <source>
    </source>
</evidence>
<evidence type="ECO:0000269" key="3">
    <source>
    </source>
</evidence>
<evidence type="ECO:0000269" key="4">
    <source>
    </source>
</evidence>
<evidence type="ECO:0000305" key="5"/>
<evidence type="ECO:0007744" key="6">
    <source>
    </source>
</evidence>
<evidence type="ECO:0007744" key="7">
    <source>
    </source>
</evidence>
<evidence type="ECO:0007829" key="8">
    <source>
        <dbReference type="PDB" id="5Z1G"/>
    </source>
</evidence>
<evidence type="ECO:0007829" key="9">
    <source>
        <dbReference type="PDB" id="7R6K"/>
    </source>
</evidence>